<gene>
    <name evidence="1" type="primary">psd</name>
    <name type="synonym">dpsD</name>
    <name type="ordered locus">XCC2555</name>
</gene>
<keyword id="KW-1003">Cell membrane</keyword>
<keyword id="KW-0210">Decarboxylase</keyword>
<keyword id="KW-0444">Lipid biosynthesis</keyword>
<keyword id="KW-0443">Lipid metabolism</keyword>
<keyword id="KW-0456">Lyase</keyword>
<keyword id="KW-0472">Membrane</keyword>
<keyword id="KW-0594">Phospholipid biosynthesis</keyword>
<keyword id="KW-1208">Phospholipid metabolism</keyword>
<keyword id="KW-0670">Pyruvate</keyword>
<keyword id="KW-1185">Reference proteome</keyword>
<keyword id="KW-0865">Zymogen</keyword>
<reference key="1">
    <citation type="journal article" date="2002" name="Nature">
        <title>Comparison of the genomes of two Xanthomonas pathogens with differing host specificities.</title>
        <authorList>
            <person name="da Silva A.C.R."/>
            <person name="Ferro J.A."/>
            <person name="Reinach F.C."/>
            <person name="Farah C.S."/>
            <person name="Furlan L.R."/>
            <person name="Quaggio R.B."/>
            <person name="Monteiro-Vitorello C.B."/>
            <person name="Van Sluys M.A."/>
            <person name="Almeida N.F. Jr."/>
            <person name="Alves L.M.C."/>
            <person name="do Amaral A.M."/>
            <person name="Bertolini M.C."/>
            <person name="Camargo L.E.A."/>
            <person name="Camarotte G."/>
            <person name="Cannavan F."/>
            <person name="Cardozo J."/>
            <person name="Chambergo F."/>
            <person name="Ciapina L.P."/>
            <person name="Cicarelli R.M.B."/>
            <person name="Coutinho L.L."/>
            <person name="Cursino-Santos J.R."/>
            <person name="El-Dorry H."/>
            <person name="Faria J.B."/>
            <person name="Ferreira A.J.S."/>
            <person name="Ferreira R.C.C."/>
            <person name="Ferro M.I.T."/>
            <person name="Formighieri E.F."/>
            <person name="Franco M.C."/>
            <person name="Greggio C.C."/>
            <person name="Gruber A."/>
            <person name="Katsuyama A.M."/>
            <person name="Kishi L.T."/>
            <person name="Leite R.P."/>
            <person name="Lemos E.G.M."/>
            <person name="Lemos M.V.F."/>
            <person name="Locali E.C."/>
            <person name="Machado M.A."/>
            <person name="Madeira A.M.B.N."/>
            <person name="Martinez-Rossi N.M."/>
            <person name="Martins E.C."/>
            <person name="Meidanis J."/>
            <person name="Menck C.F.M."/>
            <person name="Miyaki C.Y."/>
            <person name="Moon D.H."/>
            <person name="Moreira L.M."/>
            <person name="Novo M.T.M."/>
            <person name="Okura V.K."/>
            <person name="Oliveira M.C."/>
            <person name="Oliveira V.R."/>
            <person name="Pereira H.A."/>
            <person name="Rossi A."/>
            <person name="Sena J.A.D."/>
            <person name="Silva C."/>
            <person name="de Souza R.F."/>
            <person name="Spinola L.A.F."/>
            <person name="Takita M.A."/>
            <person name="Tamura R.E."/>
            <person name="Teixeira E.C."/>
            <person name="Tezza R.I.D."/>
            <person name="Trindade dos Santos M."/>
            <person name="Truffi D."/>
            <person name="Tsai S.M."/>
            <person name="White F.F."/>
            <person name="Setubal J.C."/>
            <person name="Kitajima J.P."/>
        </authorList>
    </citation>
    <scope>NUCLEOTIDE SEQUENCE [LARGE SCALE GENOMIC DNA]</scope>
    <source>
        <strain>ATCC 33913 / DSM 3586 / NCPPB 528 / LMG 568 / P 25</strain>
    </source>
</reference>
<proteinExistence type="inferred from homology"/>
<name>PSD_XANCP</name>
<accession>Q8P7Q6</accession>
<protein>
    <recommendedName>
        <fullName evidence="1">Phosphatidylserine decarboxylase proenzyme</fullName>
        <ecNumber evidence="1">4.1.1.65</ecNumber>
    </recommendedName>
    <component>
        <recommendedName>
            <fullName evidence="1">Phosphatidylserine decarboxylase alpha chain</fullName>
        </recommendedName>
    </component>
    <component>
        <recommendedName>
            <fullName evidence="1">Phosphatidylserine decarboxylase beta chain</fullName>
        </recommendedName>
    </component>
</protein>
<organism>
    <name type="scientific">Xanthomonas campestris pv. campestris (strain ATCC 33913 / DSM 3586 / NCPPB 528 / LMG 568 / P 25)</name>
    <dbReference type="NCBI Taxonomy" id="190485"/>
    <lineage>
        <taxon>Bacteria</taxon>
        <taxon>Pseudomonadati</taxon>
        <taxon>Pseudomonadota</taxon>
        <taxon>Gammaproteobacteria</taxon>
        <taxon>Lysobacterales</taxon>
        <taxon>Lysobacteraceae</taxon>
        <taxon>Xanthomonas</taxon>
    </lineage>
</organism>
<evidence type="ECO:0000255" key="1">
    <source>
        <dbReference type="HAMAP-Rule" id="MF_00662"/>
    </source>
</evidence>
<dbReference type="EC" id="4.1.1.65" evidence="1"/>
<dbReference type="EMBL" id="AE008922">
    <property type="protein sequence ID" value="AAM41827.1"/>
    <property type="molecule type" value="Genomic_DNA"/>
</dbReference>
<dbReference type="RefSeq" id="NP_637903.1">
    <property type="nucleotide sequence ID" value="NC_003902.1"/>
</dbReference>
<dbReference type="SMR" id="Q8P7Q6"/>
<dbReference type="STRING" id="190485.XCC2555"/>
<dbReference type="EnsemblBacteria" id="AAM41827">
    <property type="protein sequence ID" value="AAM41827"/>
    <property type="gene ID" value="XCC2555"/>
</dbReference>
<dbReference type="KEGG" id="xcc:XCC2555"/>
<dbReference type="PATRIC" id="fig|190485.4.peg.2722"/>
<dbReference type="eggNOG" id="COG0688">
    <property type="taxonomic scope" value="Bacteria"/>
</dbReference>
<dbReference type="HOGENOM" id="CLU_029061_4_1_6"/>
<dbReference type="OrthoDB" id="9802030at2"/>
<dbReference type="UniPathway" id="UPA00558">
    <property type="reaction ID" value="UER00616"/>
</dbReference>
<dbReference type="Proteomes" id="UP000001010">
    <property type="component" value="Chromosome"/>
</dbReference>
<dbReference type="GO" id="GO:0005886">
    <property type="term" value="C:plasma membrane"/>
    <property type="evidence" value="ECO:0007669"/>
    <property type="project" value="UniProtKB-SubCell"/>
</dbReference>
<dbReference type="GO" id="GO:0004609">
    <property type="term" value="F:phosphatidylserine decarboxylase activity"/>
    <property type="evidence" value="ECO:0000318"/>
    <property type="project" value="GO_Central"/>
</dbReference>
<dbReference type="GO" id="GO:0006646">
    <property type="term" value="P:phosphatidylethanolamine biosynthetic process"/>
    <property type="evidence" value="ECO:0000318"/>
    <property type="project" value="GO_Central"/>
</dbReference>
<dbReference type="HAMAP" id="MF_00662">
    <property type="entry name" value="PS_decarb_PSD_B_type1"/>
    <property type="match status" value="1"/>
</dbReference>
<dbReference type="InterPro" id="IPR003817">
    <property type="entry name" value="PS_Dcarbxylase"/>
</dbReference>
<dbReference type="InterPro" id="IPR033177">
    <property type="entry name" value="PSD-B"/>
</dbReference>
<dbReference type="InterPro" id="IPR033178">
    <property type="entry name" value="PSD_type1_pro"/>
</dbReference>
<dbReference type="NCBIfam" id="TIGR00163">
    <property type="entry name" value="PS_decarb"/>
    <property type="match status" value="1"/>
</dbReference>
<dbReference type="PANTHER" id="PTHR10067">
    <property type="entry name" value="PHOSPHATIDYLSERINE DECARBOXYLASE"/>
    <property type="match status" value="1"/>
</dbReference>
<dbReference type="PANTHER" id="PTHR10067:SF6">
    <property type="entry name" value="PHOSPHATIDYLSERINE DECARBOXYLASE PROENZYME, MITOCHONDRIAL"/>
    <property type="match status" value="1"/>
</dbReference>
<dbReference type="Pfam" id="PF02666">
    <property type="entry name" value="PS_Dcarbxylase"/>
    <property type="match status" value="1"/>
</dbReference>
<sequence length="282" mass="30850">MSLVTSLTYVLPHRLLSSLARALAYSKSPATKQWLIDTVTRKFGVDLSEAQEPDPRVYPTFNAFFTRALKPGARVPDADPQALLMPADGRISQLGPIENGRIFQAKGQSFTAAELLGDESAAVPFHNGLFATVYLSPKDYHRVHMPWSGTLRETVHVPGRLFSVGPDAVRNVPRLFARNERLVCHFDTDFGPMASVMVGALLVSGVETVWSGVEIPRYGDRITRKDYRGKGITLERFAEMARFNYGSTVIVLLPPGVAALEGGLAAESSVRLGQALARRQVA</sequence>
<comment type="function">
    <text evidence="1">Catalyzes the formation of phosphatidylethanolamine (PtdEtn) from phosphatidylserine (PtdSer).</text>
</comment>
<comment type="catalytic activity">
    <reaction evidence="1">
        <text>a 1,2-diacyl-sn-glycero-3-phospho-L-serine + H(+) = a 1,2-diacyl-sn-glycero-3-phosphoethanolamine + CO2</text>
        <dbReference type="Rhea" id="RHEA:20828"/>
        <dbReference type="ChEBI" id="CHEBI:15378"/>
        <dbReference type="ChEBI" id="CHEBI:16526"/>
        <dbReference type="ChEBI" id="CHEBI:57262"/>
        <dbReference type="ChEBI" id="CHEBI:64612"/>
        <dbReference type="EC" id="4.1.1.65"/>
    </reaction>
</comment>
<comment type="cofactor">
    <cofactor evidence="1">
        <name>pyruvate</name>
        <dbReference type="ChEBI" id="CHEBI:15361"/>
    </cofactor>
    <text evidence="1">Binds 1 pyruvoyl group covalently per subunit.</text>
</comment>
<comment type="pathway">
    <text evidence="1">Phospholipid metabolism; phosphatidylethanolamine biosynthesis; phosphatidylethanolamine from CDP-diacylglycerol: step 2/2.</text>
</comment>
<comment type="subunit">
    <text evidence="1">Heterodimer of a large membrane-associated beta subunit and a small pyruvoyl-containing alpha subunit.</text>
</comment>
<comment type="subcellular location">
    <subcellularLocation>
        <location evidence="1">Cell membrane</location>
        <topology evidence="1">Peripheral membrane protein</topology>
    </subcellularLocation>
</comment>
<comment type="PTM">
    <text evidence="1">Is synthesized initially as an inactive proenzyme. Formation of the active enzyme involves a self-maturation process in which the active site pyruvoyl group is generated from an internal serine residue via an autocatalytic post-translational modification. Two non-identical subunits are generated from the proenzyme in this reaction, and the pyruvate is formed at the N-terminus of the alpha chain, which is derived from the carboxyl end of the proenzyme. The autoendoproteolytic cleavage occurs by a canonical serine protease mechanism, in which the side chain hydroxyl group of the serine supplies its oxygen atom to form the C-terminus of the beta chain, while the remainder of the serine residue undergoes an oxidative deamination to produce ammonia and the pyruvoyl prosthetic group on the alpha chain. During this reaction, the Ser that is part of the protease active site of the proenzyme becomes the pyruvoyl prosthetic group, which constitutes an essential element of the active site of the mature decarboxylase.</text>
</comment>
<comment type="similarity">
    <text evidence="1">Belongs to the phosphatidylserine decarboxylase family. PSD-B subfamily. Prokaryotic type I sub-subfamily.</text>
</comment>
<feature type="chain" id="PRO_0000029715" description="Phosphatidylserine decarboxylase beta chain" evidence="1">
    <location>
        <begin position="1"/>
        <end position="246"/>
    </location>
</feature>
<feature type="chain" id="PRO_0000029716" description="Phosphatidylserine decarboxylase alpha chain" evidence="1">
    <location>
        <begin position="247"/>
        <end position="282"/>
    </location>
</feature>
<feature type="active site" description="Charge relay system; for autoendoproteolytic cleavage activity" evidence="1">
    <location>
        <position position="88"/>
    </location>
</feature>
<feature type="active site" description="Charge relay system; for autoendoproteolytic cleavage activity" evidence="1">
    <location>
        <position position="144"/>
    </location>
</feature>
<feature type="active site" description="Charge relay system; for autoendoproteolytic cleavage activity" evidence="1">
    <location>
        <position position="247"/>
    </location>
</feature>
<feature type="active site" description="Schiff-base intermediate with substrate; via pyruvic acid; for decarboxylase activity" evidence="1">
    <location>
        <position position="247"/>
    </location>
</feature>
<feature type="site" description="Cleavage (non-hydrolytic); by autocatalysis" evidence="1">
    <location>
        <begin position="246"/>
        <end position="247"/>
    </location>
</feature>
<feature type="modified residue" description="Pyruvic acid (Ser); by autocatalysis" evidence="1">
    <location>
        <position position="247"/>
    </location>
</feature>